<proteinExistence type="evidence at protein level"/>
<evidence type="ECO:0000255" key="1"/>
<evidence type="ECO:0000256" key="2">
    <source>
        <dbReference type="SAM" id="MobiDB-lite"/>
    </source>
</evidence>
<evidence type="ECO:0000269" key="3">
    <source>
    </source>
</evidence>
<evidence type="ECO:0000303" key="4">
    <source>
    </source>
</evidence>
<evidence type="ECO:0000305" key="5"/>
<evidence type="ECO:0007829" key="6">
    <source>
        <dbReference type="PDB" id="2ML1"/>
    </source>
</evidence>
<evidence type="ECO:0007829" key="7">
    <source>
        <dbReference type="PDB" id="2ML2"/>
    </source>
</evidence>
<evidence type="ECO:0007829" key="8">
    <source>
        <dbReference type="PDB" id="2ML3"/>
    </source>
</evidence>
<evidence type="ECO:0007829" key="9">
    <source>
        <dbReference type="PDB" id="5LW3"/>
    </source>
</evidence>
<keyword id="KW-0002">3D-structure</keyword>
<keyword id="KW-0016">Alginate biosynthesis</keyword>
<keyword id="KW-0106">Calcium</keyword>
<keyword id="KW-0413">Isomerase</keyword>
<keyword id="KW-0677">Repeat</keyword>
<keyword id="KW-0964">Secreted</keyword>
<reference key="1">
    <citation type="journal article" date="1999" name="J. Bacteriol.">
        <title>Cloning and expression of three new Azotobacter vinelandii genes closely related to a previously described gene family encoding mannuronan C-5-epimerases.</title>
        <authorList>
            <person name="Glaerum Svanem B.I."/>
            <person name="Skjaak-Braek G."/>
            <person name="Ertesvaag H."/>
            <person name="Valla S."/>
        </authorList>
    </citation>
    <scope>NUCLEOTIDE SEQUENCE [GENOMIC DNA]</scope>
    <scope>FUNCTION</scope>
    <scope>CATALYTIC ACTIVITY</scope>
    <source>
        <strain>E</strain>
    </source>
</reference>
<reference key="2">
    <citation type="journal article" date="2000" name="Environ. Microbiol.">
        <title>Mannuronan C-5 epimerases and cellular differentiation of Azotobacter vinelandii.</title>
        <authorList>
            <person name="Hoeidal H.K."/>
            <person name="Glaerum Svanem B.I."/>
            <person name="Gimmestad M."/>
            <person name="Valla S."/>
        </authorList>
    </citation>
    <scope>EXPRESSION</scope>
    <source>
        <strain>E</strain>
    </source>
</reference>
<reference key="3">
    <citation type="journal article" date="1999" name="Metab. Eng.">
        <title>Mannuronan C-5-epimerases and their application for in vitro and in vivo design of new alginates useful in biotechnology.</title>
        <authorList>
            <person name="Ertesvaag H."/>
            <person name="Hoeidal H.K."/>
            <person name="Schjerven H."/>
            <person name="Glaerum Svanem B.I."/>
            <person name="Valla S."/>
        </authorList>
    </citation>
    <scope>REVIEW</scope>
</reference>
<organism>
    <name type="scientific">Azotobacter vinelandii</name>
    <dbReference type="NCBI Taxonomy" id="354"/>
    <lineage>
        <taxon>Bacteria</taxon>
        <taxon>Pseudomonadati</taxon>
        <taxon>Pseudomonadota</taxon>
        <taxon>Gammaproteobacteria</taxon>
        <taxon>Pseudomonadales</taxon>
        <taxon>Pseudomonadaceae</taxon>
        <taxon>Azotobacter</taxon>
    </lineage>
</organism>
<name>ALGE6_AZOVI</name>
<gene>
    <name evidence="4" type="primary">algE6</name>
</gene>
<feature type="chain" id="PRO_0000219560" description="Mannuronan C5-epimerase AlgE6">
    <location>
        <begin position="1"/>
        <end position="874"/>
    </location>
</feature>
<feature type="repeat" description="PbH1 1" evidence="1">
    <location>
        <begin position="133"/>
        <end position="155"/>
    </location>
</feature>
<feature type="repeat" description="PbH1 2" evidence="1">
    <location>
        <begin position="157"/>
        <end position="179"/>
    </location>
</feature>
<feature type="repeat" description="PbH1 3" evidence="1">
    <location>
        <begin position="180"/>
        <end position="202"/>
    </location>
</feature>
<feature type="repeat" description="PbH1 4" evidence="1">
    <location>
        <begin position="204"/>
        <end position="226"/>
    </location>
</feature>
<feature type="repeat" description="PbH1 5" evidence="1">
    <location>
        <begin position="234"/>
        <end position="256"/>
    </location>
</feature>
<feature type="repeat" description="PbH1 6" evidence="1">
    <location>
        <begin position="257"/>
        <end position="279"/>
    </location>
</feature>
<feature type="repeat" description="PbH1 7" evidence="1">
    <location>
        <begin position="280"/>
        <end position="302"/>
    </location>
</feature>
<feature type="repeat" description="PbH1 8" evidence="1">
    <location>
        <begin position="320"/>
        <end position="351"/>
    </location>
</feature>
<feature type="repeat" description="Hemolysin-type calcium-binding 1" evidence="1">
    <location>
        <begin position="383"/>
        <end position="394"/>
    </location>
</feature>
<feature type="repeat" description="Hemolysin-type calcium-binding 2" evidence="1">
    <location>
        <begin position="401"/>
        <end position="417"/>
    </location>
</feature>
<feature type="repeat" description="Hemolysin-type calcium-binding 3" evidence="1">
    <location>
        <begin position="419"/>
        <end position="435"/>
    </location>
</feature>
<feature type="repeat" description="Hemolysin-type calcium-binding 4" evidence="1">
    <location>
        <begin position="562"/>
        <end position="578"/>
    </location>
</feature>
<feature type="repeat" description="Hemolysin-type calcium-binding 5" evidence="1">
    <location>
        <begin position="580"/>
        <end position="596"/>
    </location>
</feature>
<feature type="repeat" description="Hemolysin-type calcium-binding 6" evidence="1">
    <location>
        <begin position="723"/>
        <end position="739"/>
    </location>
</feature>
<feature type="repeat" description="Hemolysin-type calcium-binding 7" evidence="1">
    <location>
        <begin position="741"/>
        <end position="757"/>
    </location>
</feature>
<feature type="region of interest" description="Disordered" evidence="2">
    <location>
        <begin position="401"/>
        <end position="420"/>
    </location>
</feature>
<feature type="helix" evidence="9">
    <location>
        <begin position="5"/>
        <end position="8"/>
    </location>
</feature>
<feature type="strand" evidence="9">
    <location>
        <begin position="13"/>
        <end position="17"/>
    </location>
</feature>
<feature type="helix" evidence="9">
    <location>
        <begin position="19"/>
        <end position="31"/>
    </location>
</feature>
<feature type="strand" evidence="9">
    <location>
        <begin position="35"/>
        <end position="39"/>
    </location>
</feature>
<feature type="strand" evidence="9">
    <location>
        <begin position="41"/>
        <end position="46"/>
    </location>
</feature>
<feature type="helix" evidence="9">
    <location>
        <begin position="52"/>
        <end position="54"/>
    </location>
</feature>
<feature type="strand" evidence="9">
    <location>
        <begin position="56"/>
        <end position="58"/>
    </location>
</feature>
<feature type="strand" evidence="9">
    <location>
        <begin position="63"/>
        <end position="69"/>
    </location>
</feature>
<feature type="turn" evidence="9">
    <location>
        <begin position="70"/>
        <end position="72"/>
    </location>
</feature>
<feature type="strand" evidence="9">
    <location>
        <begin position="73"/>
        <end position="77"/>
    </location>
</feature>
<feature type="strand" evidence="9">
    <location>
        <begin position="85"/>
        <end position="90"/>
    </location>
</feature>
<feature type="strand" evidence="9">
    <location>
        <begin position="98"/>
        <end position="108"/>
    </location>
</feature>
<feature type="helix" evidence="9">
    <location>
        <begin position="111"/>
        <end position="113"/>
    </location>
</feature>
<feature type="strand" evidence="9">
    <location>
        <begin position="118"/>
        <end position="123"/>
    </location>
</feature>
<feature type="strand" evidence="9">
    <location>
        <begin position="133"/>
        <end position="144"/>
    </location>
</feature>
<feature type="strand" evidence="9">
    <location>
        <begin position="150"/>
        <end position="153"/>
    </location>
</feature>
<feature type="strand" evidence="9">
    <location>
        <begin position="155"/>
        <end position="159"/>
    </location>
</feature>
<feature type="strand" evidence="9">
    <location>
        <begin position="161"/>
        <end position="164"/>
    </location>
</feature>
<feature type="strand" evidence="9">
    <location>
        <begin position="166"/>
        <end position="169"/>
    </location>
</feature>
<feature type="strand" evidence="9">
    <location>
        <begin position="174"/>
        <end position="182"/>
    </location>
</feature>
<feature type="strand" evidence="9">
    <location>
        <begin position="184"/>
        <end position="187"/>
    </location>
</feature>
<feature type="strand" evidence="9">
    <location>
        <begin position="189"/>
        <end position="192"/>
    </location>
</feature>
<feature type="strand" evidence="9">
    <location>
        <begin position="197"/>
        <end position="201"/>
    </location>
</feature>
<feature type="strand" evidence="9">
    <location>
        <begin position="205"/>
        <end position="211"/>
    </location>
</feature>
<feature type="strand" evidence="9">
    <location>
        <begin position="213"/>
        <end position="216"/>
    </location>
</feature>
<feature type="strand" evidence="9">
    <location>
        <begin position="221"/>
        <end position="225"/>
    </location>
</feature>
<feature type="strand" evidence="9">
    <location>
        <begin position="228"/>
        <end position="230"/>
    </location>
</feature>
<feature type="strand" evidence="9">
    <location>
        <begin position="235"/>
        <end position="241"/>
    </location>
</feature>
<feature type="strand" evidence="9">
    <location>
        <begin position="243"/>
        <end position="246"/>
    </location>
</feature>
<feature type="strand" evidence="9">
    <location>
        <begin position="251"/>
        <end position="256"/>
    </location>
</feature>
<feature type="strand" evidence="9">
    <location>
        <begin position="258"/>
        <end position="264"/>
    </location>
</feature>
<feature type="strand" evidence="9">
    <location>
        <begin position="266"/>
        <end position="269"/>
    </location>
</feature>
<feature type="strand" evidence="9">
    <location>
        <begin position="274"/>
        <end position="279"/>
    </location>
</feature>
<feature type="strand" evidence="9">
    <location>
        <begin position="284"/>
        <end position="287"/>
    </location>
</feature>
<feature type="strand" evidence="9">
    <location>
        <begin position="289"/>
        <end position="292"/>
    </location>
</feature>
<feature type="strand" evidence="9">
    <location>
        <begin position="301"/>
        <end position="305"/>
    </location>
</feature>
<feature type="strand" evidence="9">
    <location>
        <begin position="312"/>
        <end position="314"/>
    </location>
</feature>
<feature type="strand" evidence="9">
    <location>
        <begin position="324"/>
        <end position="327"/>
    </location>
</feature>
<feature type="strand" evidence="9">
    <location>
        <begin position="329"/>
        <end position="331"/>
    </location>
</feature>
<feature type="strand" evidence="9">
    <location>
        <begin position="338"/>
        <end position="342"/>
    </location>
</feature>
<feature type="strand" evidence="9">
    <location>
        <begin position="344"/>
        <end position="346"/>
    </location>
</feature>
<feature type="strand" evidence="9">
    <location>
        <begin position="351"/>
        <end position="354"/>
    </location>
</feature>
<feature type="strand" evidence="9">
    <location>
        <begin position="356"/>
        <end position="365"/>
    </location>
</feature>
<feature type="strand" evidence="9">
    <location>
        <begin position="372"/>
        <end position="374"/>
    </location>
</feature>
<feature type="strand" evidence="6">
    <location>
        <begin position="388"/>
        <end position="391"/>
    </location>
</feature>
<feature type="strand" evidence="6">
    <location>
        <begin position="398"/>
        <end position="400"/>
    </location>
</feature>
<feature type="strand" evidence="6">
    <location>
        <begin position="403"/>
        <end position="409"/>
    </location>
</feature>
<feature type="strand" evidence="6">
    <location>
        <begin position="415"/>
        <end position="418"/>
    </location>
</feature>
<feature type="strand" evidence="6">
    <location>
        <begin position="424"/>
        <end position="427"/>
    </location>
</feature>
<feature type="strand" evidence="6">
    <location>
        <begin position="433"/>
        <end position="436"/>
    </location>
</feature>
<feature type="strand" evidence="6">
    <location>
        <begin position="454"/>
        <end position="457"/>
    </location>
</feature>
<feature type="turn" evidence="6">
    <location>
        <begin position="460"/>
        <end position="462"/>
    </location>
</feature>
<feature type="turn" evidence="6">
    <location>
        <begin position="468"/>
        <end position="470"/>
    </location>
</feature>
<feature type="strand" evidence="6">
    <location>
        <begin position="473"/>
        <end position="477"/>
    </location>
</feature>
<feature type="strand" evidence="6">
    <location>
        <begin position="484"/>
        <end position="487"/>
    </location>
</feature>
<feature type="strand" evidence="6">
    <location>
        <begin position="491"/>
        <end position="497"/>
    </location>
</feature>
<feature type="strand" evidence="6">
    <location>
        <begin position="502"/>
        <end position="504"/>
    </location>
</feature>
<feature type="strand" evidence="6">
    <location>
        <begin position="510"/>
        <end position="514"/>
    </location>
</feature>
<feature type="helix" evidence="6">
    <location>
        <begin position="517"/>
        <end position="519"/>
    </location>
</feature>
<feature type="helix" evidence="6">
    <location>
        <begin position="522"/>
        <end position="524"/>
    </location>
</feature>
<feature type="strand" evidence="7">
    <location>
        <begin position="550"/>
        <end position="552"/>
    </location>
</feature>
<feature type="strand" evidence="7">
    <location>
        <begin position="568"/>
        <end position="570"/>
    </location>
</feature>
<feature type="strand" evidence="7">
    <location>
        <begin position="582"/>
        <end position="588"/>
    </location>
</feature>
<feature type="strand" evidence="7">
    <location>
        <begin position="595"/>
        <end position="597"/>
    </location>
</feature>
<feature type="helix" evidence="7">
    <location>
        <begin position="602"/>
        <end position="604"/>
    </location>
</feature>
<feature type="strand" evidence="7">
    <location>
        <begin position="605"/>
        <end position="607"/>
    </location>
</feature>
<feature type="strand" evidence="7">
    <location>
        <begin position="614"/>
        <end position="618"/>
    </location>
</feature>
<feature type="strand" evidence="7">
    <location>
        <begin position="625"/>
        <end position="627"/>
    </location>
</feature>
<feature type="helix" evidence="7">
    <location>
        <begin position="629"/>
        <end position="631"/>
    </location>
</feature>
<feature type="strand" evidence="7">
    <location>
        <begin position="645"/>
        <end position="649"/>
    </location>
</feature>
<feature type="turn" evidence="7">
    <location>
        <begin position="650"/>
        <end position="653"/>
    </location>
</feature>
<feature type="strand" evidence="7">
    <location>
        <begin position="654"/>
        <end position="658"/>
    </location>
</feature>
<feature type="strand" evidence="7">
    <location>
        <begin position="663"/>
        <end position="666"/>
    </location>
</feature>
<feature type="strand" evidence="7">
    <location>
        <begin position="668"/>
        <end position="675"/>
    </location>
</feature>
<feature type="turn" evidence="7">
    <location>
        <begin position="677"/>
        <end position="680"/>
    </location>
</feature>
<feature type="turn" evidence="7">
    <location>
        <begin position="683"/>
        <end position="685"/>
    </location>
</feature>
<feature type="strand" evidence="8">
    <location>
        <begin position="711"/>
        <end position="713"/>
    </location>
</feature>
<feature type="strand" evidence="8">
    <location>
        <begin position="720"/>
        <end position="722"/>
    </location>
</feature>
<feature type="strand" evidence="8">
    <location>
        <begin position="729"/>
        <end position="731"/>
    </location>
</feature>
<feature type="strand" evidence="8">
    <location>
        <begin position="738"/>
        <end position="740"/>
    </location>
</feature>
<feature type="strand" evidence="8">
    <location>
        <begin position="747"/>
        <end position="749"/>
    </location>
</feature>
<feature type="strand" evidence="8">
    <location>
        <begin position="776"/>
        <end position="779"/>
    </location>
</feature>
<feature type="turn" evidence="8">
    <location>
        <begin position="782"/>
        <end position="784"/>
    </location>
</feature>
<feature type="strand" evidence="8">
    <location>
        <begin position="786"/>
        <end position="788"/>
    </location>
</feature>
<feature type="turn" evidence="8">
    <location>
        <begin position="790"/>
        <end position="793"/>
    </location>
</feature>
<feature type="strand" evidence="8">
    <location>
        <begin position="801"/>
        <end position="804"/>
    </location>
</feature>
<feature type="strand" evidence="8">
    <location>
        <begin position="807"/>
        <end position="814"/>
    </location>
</feature>
<feature type="strand" evidence="8">
    <location>
        <begin position="816"/>
        <end position="823"/>
    </location>
</feature>
<feature type="strand" evidence="8">
    <location>
        <begin position="829"/>
        <end position="836"/>
    </location>
</feature>
<feature type="helix" evidence="8">
    <location>
        <begin position="839"/>
        <end position="841"/>
    </location>
</feature>
<feature type="strand" evidence="8">
    <location>
        <begin position="846"/>
        <end position="848"/>
    </location>
</feature>
<sequence>MDYNVKDFGALGDGVSDDRVAIQAAIDAAHAAGGGTVYLPPGEYRVSAAGEPSDGCLTLRDNVYLAGAGMGQTVIKLVDGSAQKITGIVRSPFGEETSNFGMRDLTLDGNRANTVDKVDGWFNGYAPGQPGADRNVTIERVEVREMSGYGFDPHEQTINLVLRDSVAHHNGLDGFVADYQIGGTFENNVAYANDRHGFNIVTSTNDFVMRNNVAYGNGGNGLVVQRGSENLAHPENILIDGGSYYDNGLEGVLVKMSNNVTVQNADIHGNGSSGVRVYGAQGVQILGNQIHDNAKTAVAPEVLLQSYDDTLGVSGNYYTTLNTRVEGNTITGSANSTYGVQERNDGTDFSSLVGNTINGVQEAAHLYGPNSTVSGTVSAPPQGTDGNDVLIGSDVGEQISGGAGDDRLDGGAGDDLLDGGAGRDRLTGGLGADTFRFALREDSHRSPLGTFSDLILDFDPSQDKIDVSALGFIGLGNGYAGTLAVSLSADGLRTYLKSYDADAQGRSFELALDGNHAATLSAGNIVFAAATPVDPSAEAQPIVGSDLDDQLHGTLLGEEISGGGGADQLYGYGGGDLLDGGAGRDRLTGGEGADTFRFALREDSHRSAAGTFSDLILDFDPTQDKLDVSALGFTGLGNGYAGTLAVSVSDDGTRTYLKSYETDAEGRSFEVSLQGNHAAALSADNILFATPVPVDPGVEGTPVVGSDLDDELHGTLGSEQILGGGGADQLYGYAGNDLLDGGAGRDKLSGGEGADTFRFALREDSHRSPLGTFGDRILDFDPSQDRIDVSALGFSGLGNGYAGSLAVSVSDDGTRTYLKSYEADAQGLSFEVALEGDHAAALSADNIVFAATDAAAAGELGVIGASGQPDDPAV</sequence>
<accession>Q9ZFH0</accession>
<dbReference type="EC" id="5.1.3.37" evidence="3"/>
<dbReference type="EMBL" id="AF099799">
    <property type="protein sequence ID" value="AAD04920.1"/>
    <property type="molecule type" value="Genomic_DNA"/>
</dbReference>
<dbReference type="RefSeq" id="WP_302227727.1">
    <property type="nucleotide sequence ID" value="NZ_CP092752.2"/>
</dbReference>
<dbReference type="PDB" id="2ML1">
    <property type="method" value="NMR"/>
    <property type="chains" value="A=382-532"/>
</dbReference>
<dbReference type="PDB" id="2ML2">
    <property type="method" value="NMR"/>
    <property type="chains" value="A=534-694"/>
</dbReference>
<dbReference type="PDB" id="2ML3">
    <property type="method" value="NMR"/>
    <property type="chains" value="A=695-872"/>
</dbReference>
<dbReference type="PDB" id="5LW3">
    <property type="method" value="X-ray"/>
    <property type="resolution" value="1.19 A"/>
    <property type="chains" value="A=1-385"/>
</dbReference>
<dbReference type="PDBsum" id="2ML1"/>
<dbReference type="PDBsum" id="2ML2"/>
<dbReference type="PDBsum" id="2ML3"/>
<dbReference type="PDBsum" id="5LW3"/>
<dbReference type="BMRB" id="Q9ZFH0"/>
<dbReference type="SMR" id="Q9ZFH0"/>
<dbReference type="BRENDA" id="5.1.3.37">
    <property type="organism ID" value="49"/>
</dbReference>
<dbReference type="UniPathway" id="UPA00286"/>
<dbReference type="EvolutionaryTrace" id="Q9ZFH0"/>
<dbReference type="GO" id="GO:0005615">
    <property type="term" value="C:extracellular space"/>
    <property type="evidence" value="ECO:0007669"/>
    <property type="project" value="InterPro"/>
</dbReference>
<dbReference type="GO" id="GO:0005509">
    <property type="term" value="F:calcium ion binding"/>
    <property type="evidence" value="ECO:0007669"/>
    <property type="project" value="InterPro"/>
</dbReference>
<dbReference type="GO" id="GO:0016853">
    <property type="term" value="F:isomerase activity"/>
    <property type="evidence" value="ECO:0007669"/>
    <property type="project" value="UniProtKB-KW"/>
</dbReference>
<dbReference type="GO" id="GO:0042121">
    <property type="term" value="P:alginic acid biosynthetic process"/>
    <property type="evidence" value="ECO:0007669"/>
    <property type="project" value="UniProtKB-UniPathway"/>
</dbReference>
<dbReference type="Gene3D" id="2.150.10.10">
    <property type="entry name" value="Serralysin-like metalloprotease, C-terminal"/>
    <property type="match status" value="2"/>
</dbReference>
<dbReference type="Gene3D" id="2.160.20.10">
    <property type="entry name" value="Single-stranded right-handed beta-helix, Pectin lyase-like"/>
    <property type="match status" value="1"/>
</dbReference>
<dbReference type="InterPro" id="IPR039448">
    <property type="entry name" value="Beta_helix"/>
</dbReference>
<dbReference type="InterPro" id="IPR006633">
    <property type="entry name" value="Carb-bd_sugar_hydrolysis-dom"/>
</dbReference>
<dbReference type="InterPro" id="IPR018511">
    <property type="entry name" value="Hemolysin-typ_Ca-bd_CS"/>
</dbReference>
<dbReference type="InterPro" id="IPR001343">
    <property type="entry name" value="Hemolysn_Ca-bd"/>
</dbReference>
<dbReference type="InterPro" id="IPR006626">
    <property type="entry name" value="PbH1"/>
</dbReference>
<dbReference type="InterPro" id="IPR012334">
    <property type="entry name" value="Pectin_lyas_fold"/>
</dbReference>
<dbReference type="InterPro" id="IPR011050">
    <property type="entry name" value="Pectin_lyase_fold/virulence"/>
</dbReference>
<dbReference type="InterPro" id="IPR013858">
    <property type="entry name" value="Peptidase_M10B_C"/>
</dbReference>
<dbReference type="InterPro" id="IPR024535">
    <property type="entry name" value="RHGA/B-epi-like_pectate_lyase"/>
</dbReference>
<dbReference type="InterPro" id="IPR050557">
    <property type="entry name" value="RTX_toxin/Mannuronan_C5-epim"/>
</dbReference>
<dbReference type="InterPro" id="IPR011049">
    <property type="entry name" value="Serralysin-like_metalloprot_C"/>
</dbReference>
<dbReference type="PANTHER" id="PTHR38340">
    <property type="entry name" value="S-LAYER PROTEIN"/>
    <property type="match status" value="1"/>
</dbReference>
<dbReference type="PANTHER" id="PTHR38340:SF1">
    <property type="entry name" value="S-LAYER PROTEIN"/>
    <property type="match status" value="1"/>
</dbReference>
<dbReference type="Pfam" id="PF13229">
    <property type="entry name" value="Beta_helix"/>
    <property type="match status" value="1"/>
</dbReference>
<dbReference type="Pfam" id="PF00353">
    <property type="entry name" value="HemolysinCabind"/>
    <property type="match status" value="3"/>
</dbReference>
<dbReference type="Pfam" id="PF12708">
    <property type="entry name" value="Pect-lyase_RHGA_epim"/>
    <property type="match status" value="1"/>
</dbReference>
<dbReference type="Pfam" id="PF08548">
    <property type="entry name" value="Peptidase_M10_C"/>
    <property type="match status" value="3"/>
</dbReference>
<dbReference type="PRINTS" id="PR00313">
    <property type="entry name" value="CABNDNGRPT"/>
</dbReference>
<dbReference type="SMART" id="SM00722">
    <property type="entry name" value="CASH"/>
    <property type="match status" value="2"/>
</dbReference>
<dbReference type="SMART" id="SM00710">
    <property type="entry name" value="PbH1"/>
    <property type="match status" value="8"/>
</dbReference>
<dbReference type="SUPFAM" id="SSF51120">
    <property type="entry name" value="beta-Roll"/>
    <property type="match status" value="3"/>
</dbReference>
<dbReference type="SUPFAM" id="SSF51126">
    <property type="entry name" value="Pectin lyase-like"/>
    <property type="match status" value="1"/>
</dbReference>
<dbReference type="PROSITE" id="PS00330">
    <property type="entry name" value="HEMOLYSIN_CALCIUM"/>
    <property type="match status" value="6"/>
</dbReference>
<comment type="function">
    <text evidence="3">Converts beta-D-mannuronic acid (M) to alpha-L-guluronic acid (G), producing a polymer with gel-forming capacity, required for the formation of the cyst coat.</text>
</comment>
<comment type="catalytic activity">
    <reaction evidence="3">
        <text>[(1-&gt;4)-beta-D-mannuronosyl](n) = [alginate](n)</text>
        <dbReference type="Rhea" id="RHEA:45572"/>
        <dbReference type="Rhea" id="RHEA-COMP:11264"/>
        <dbReference type="Rhea" id="RHEA-COMP:11270"/>
        <dbReference type="ChEBI" id="CHEBI:58187"/>
        <dbReference type="ChEBI" id="CHEBI:85311"/>
        <dbReference type="EC" id="5.1.3.37"/>
    </reaction>
</comment>
<comment type="cofactor">
    <cofactor>
        <name>Ca(2+)</name>
        <dbReference type="ChEBI" id="CHEBI:29108"/>
    </cofactor>
</comment>
<comment type="activity regulation">
    <text>Inhibited by zinc.</text>
</comment>
<comment type="pathway">
    <text>Glycan biosynthesis; alginate biosynthesis.</text>
</comment>
<comment type="subcellular location">
    <subcellularLocation>
        <location>Secreted</location>
    </subcellularLocation>
    <text>Probably exported via the hemolysin-type secretion pathway.</text>
</comment>
<comment type="developmental stage">
    <text>Produced in encysting cells.</text>
</comment>
<comment type="domain">
    <text>Composed of one catalytically active A module and three R modules.</text>
</comment>
<comment type="miscellaneous">
    <text>Each enzyme of this family of C5 epimerases introduces its own characteristic sequence distribution of G-blocks in their substrates, explaining the extensive sequence variability of alginates. These alginates of varying composition have different physical properties and are necessary at different stages of the bacterium life cycle.</text>
</comment>
<comment type="similarity">
    <text evidence="5">Belongs to the D-mannuronate C5-epimerase family.</text>
</comment>
<protein>
    <recommendedName>
        <fullName evidence="5">Mannuronan C5-epimerase AlgE6</fullName>
        <ecNumber evidence="3">5.1.3.37</ecNumber>
    </recommendedName>
    <alternativeName>
        <fullName>Poly(beta-D-mannuronate) C5 epimerase 6</fullName>
    </alternativeName>
</protein>